<keyword id="KW-0150">Chloroplast</keyword>
<keyword id="KW-0249">Electron transport</keyword>
<keyword id="KW-0472">Membrane</keyword>
<keyword id="KW-0602">Photosynthesis</keyword>
<keyword id="KW-0934">Plastid</keyword>
<keyword id="KW-0793">Thylakoid</keyword>
<keyword id="KW-0812">Transmembrane</keyword>
<keyword id="KW-1133">Transmembrane helix</keyword>
<keyword id="KW-0813">Transport</keyword>
<name>PETN_ZYGCR</name>
<organism>
    <name type="scientific">Zygnema circumcarinatum</name>
    <name type="common">Green alga</name>
    <dbReference type="NCBI Taxonomy" id="35869"/>
    <lineage>
        <taxon>Eukaryota</taxon>
        <taxon>Viridiplantae</taxon>
        <taxon>Streptophyta</taxon>
        <taxon>Zygnematophyceae</taxon>
        <taxon>Zygnematophycidae</taxon>
        <taxon>Zygnematales</taxon>
        <taxon>Zygnemataceae</taxon>
        <taxon>Zygnema</taxon>
    </lineage>
</organism>
<proteinExistence type="inferred from homology"/>
<feature type="chain" id="PRO_0000275570" description="Cytochrome b6-f complex subunit 8">
    <location>
        <begin position="1"/>
        <end position="29"/>
    </location>
</feature>
<feature type="transmembrane region" description="Helical" evidence="1">
    <location>
        <begin position="3"/>
        <end position="23"/>
    </location>
</feature>
<reference key="1">
    <citation type="journal article" date="2005" name="BMC Biol.">
        <title>The complete chloroplast DNA sequences of the charophycean green algae Staurastrum and Zygnema reveal that the chloroplast genome underwent extensive changes during the evolution of the Zygnematales.</title>
        <authorList>
            <person name="Turmel M."/>
            <person name="Otis C."/>
            <person name="Lemieux C."/>
        </authorList>
    </citation>
    <scope>NUCLEOTIDE SEQUENCE [LARGE SCALE GENOMIC DNA]</scope>
</reference>
<gene>
    <name evidence="1" type="primary">petN</name>
</gene>
<evidence type="ECO:0000255" key="1">
    <source>
        <dbReference type="HAMAP-Rule" id="MF_00395"/>
    </source>
</evidence>
<dbReference type="EMBL" id="AY958086">
    <property type="protein sequence ID" value="AAX45829.1"/>
    <property type="molecule type" value="Genomic_DNA"/>
</dbReference>
<dbReference type="RefSeq" id="YP_636567.1">
    <property type="nucleotide sequence ID" value="NC_008117.1"/>
</dbReference>
<dbReference type="SMR" id="Q32RF9"/>
<dbReference type="GeneID" id="4108149"/>
<dbReference type="GO" id="GO:0009535">
    <property type="term" value="C:chloroplast thylakoid membrane"/>
    <property type="evidence" value="ECO:0007669"/>
    <property type="project" value="UniProtKB-SubCell"/>
</dbReference>
<dbReference type="GO" id="GO:0009512">
    <property type="term" value="C:cytochrome b6f complex"/>
    <property type="evidence" value="ECO:0007669"/>
    <property type="project" value="InterPro"/>
</dbReference>
<dbReference type="GO" id="GO:0045158">
    <property type="term" value="F:electron transporter, transferring electrons within cytochrome b6/f complex of photosystem II activity"/>
    <property type="evidence" value="ECO:0007669"/>
    <property type="project" value="InterPro"/>
</dbReference>
<dbReference type="GO" id="GO:0017004">
    <property type="term" value="P:cytochrome complex assembly"/>
    <property type="evidence" value="ECO:0007669"/>
    <property type="project" value="UniProtKB-UniRule"/>
</dbReference>
<dbReference type="GO" id="GO:0015979">
    <property type="term" value="P:photosynthesis"/>
    <property type="evidence" value="ECO:0007669"/>
    <property type="project" value="UniProtKB-KW"/>
</dbReference>
<dbReference type="HAMAP" id="MF_00395">
    <property type="entry name" value="Cytb6_f_PetN"/>
    <property type="match status" value="1"/>
</dbReference>
<dbReference type="InterPro" id="IPR036143">
    <property type="entry name" value="Cytochr_b6-f_cplx_su8_sf"/>
</dbReference>
<dbReference type="InterPro" id="IPR005497">
    <property type="entry name" value="Cytochrome_b6-f_cplx_su8"/>
</dbReference>
<dbReference type="Pfam" id="PF03742">
    <property type="entry name" value="PetN"/>
    <property type="match status" value="1"/>
</dbReference>
<dbReference type="SUPFAM" id="SSF103451">
    <property type="entry name" value="PetN subunit of the cytochrome b6f complex"/>
    <property type="match status" value="1"/>
</dbReference>
<geneLocation type="chloroplast"/>
<protein>
    <recommendedName>
        <fullName evidence="1">Cytochrome b6-f complex subunit 8</fullName>
    </recommendedName>
    <alternativeName>
        <fullName evidence="1">Cytochrome b6-f complex subunit PetN</fullName>
    </alternativeName>
    <alternativeName>
        <fullName evidence="1">Cytochrome b6-f complex subunit VIII</fullName>
    </alternativeName>
</protein>
<accession>Q32RF9</accession>
<comment type="function">
    <text evidence="1">Component of the cytochrome b6-f complex, which mediates electron transfer between photosystem II (PSII) and photosystem I (PSI), cyclic electron flow around PSI, and state transitions.</text>
</comment>
<comment type="subunit">
    <text evidence="1">The 4 large subunits of the cytochrome b6-f complex are cytochrome b6, subunit IV (17 kDa polypeptide, PetD), cytochrome f and the Rieske protein, while the 4 small subunits are PetG, PetL, PetM and PetN. The complex functions as a dimer.</text>
</comment>
<comment type="subcellular location">
    <subcellularLocation>
        <location>Plastid</location>
        <location>Chloroplast thylakoid membrane</location>
        <topology>Single-pass membrane protein</topology>
    </subcellularLocation>
</comment>
<comment type="similarity">
    <text evidence="1">Belongs to the PetN family.</text>
</comment>
<sequence length="29" mass="3156">MDIVSIGWAALMVVFTFSLSLVVWGRSGL</sequence>